<reference key="1">
    <citation type="journal article" date="1998" name="Glycoconj. J.">
        <title>A novel second isoenzyme of the human UDP-N-acetylglucosamine:alpha1,3-D-mannoside beta1,4-N-acetylglucosaminyltransferase family: cDNA cloning, expression, and chromosomal assignment.</title>
        <authorList>
            <person name="Yoshida A."/>
            <person name="Minowa M.T."/>
            <person name="Takamatsu S."/>
            <person name="Hara T."/>
            <person name="Ikenaga H."/>
            <person name="Takeuchi M."/>
        </authorList>
    </citation>
    <scope>NUCLEOTIDE SEQUENCE [MRNA] (ISOFORM 1)</scope>
    <scope>TISSUE SPECIFICITY</scope>
    <scope>CATALYTIC ACTIVITY</scope>
    <scope>FUNCTION</scope>
    <scope>PATHWAY</scope>
    <source>
        <tissue>Lung</tissue>
    </source>
</reference>
<reference key="2">
    <citation type="journal article" date="2003" name="Genome Res.">
        <title>The secreted protein discovery initiative (SPDI), a large-scale effort to identify novel human secreted and transmembrane proteins: a bioinformatics assessment.</title>
        <authorList>
            <person name="Clark H.F."/>
            <person name="Gurney A.L."/>
            <person name="Abaya E."/>
            <person name="Baker K."/>
            <person name="Baldwin D.T."/>
            <person name="Brush J."/>
            <person name="Chen J."/>
            <person name="Chow B."/>
            <person name="Chui C."/>
            <person name="Crowley C."/>
            <person name="Currell B."/>
            <person name="Deuel B."/>
            <person name="Dowd P."/>
            <person name="Eaton D."/>
            <person name="Foster J.S."/>
            <person name="Grimaldi C."/>
            <person name="Gu Q."/>
            <person name="Hass P.E."/>
            <person name="Heldens S."/>
            <person name="Huang A."/>
            <person name="Kim H.S."/>
            <person name="Klimowski L."/>
            <person name="Jin Y."/>
            <person name="Johnson S."/>
            <person name="Lee J."/>
            <person name="Lewis L."/>
            <person name="Liao D."/>
            <person name="Mark M.R."/>
            <person name="Robbie E."/>
            <person name="Sanchez C."/>
            <person name="Schoenfeld J."/>
            <person name="Seshagiri S."/>
            <person name="Simmons L."/>
            <person name="Singh J."/>
            <person name="Smith V."/>
            <person name="Stinson J."/>
            <person name="Vagts A."/>
            <person name="Vandlen R.L."/>
            <person name="Watanabe C."/>
            <person name="Wieand D."/>
            <person name="Woods K."/>
            <person name="Xie M.-H."/>
            <person name="Yansura D.G."/>
            <person name="Yi S."/>
            <person name="Yu G."/>
            <person name="Yuan J."/>
            <person name="Zhang M."/>
            <person name="Zhang Z."/>
            <person name="Goddard A.D."/>
            <person name="Wood W.I."/>
            <person name="Godowski P.J."/>
            <person name="Gray A.M."/>
        </authorList>
    </citation>
    <scope>NUCLEOTIDE SEQUENCE [LARGE SCALE MRNA] (ISOFORM 1)</scope>
</reference>
<reference key="3">
    <citation type="journal article" date="2004" name="Nat. Genet.">
        <title>Complete sequencing and characterization of 21,243 full-length human cDNAs.</title>
        <authorList>
            <person name="Ota T."/>
            <person name="Suzuki Y."/>
            <person name="Nishikawa T."/>
            <person name="Otsuki T."/>
            <person name="Sugiyama T."/>
            <person name="Irie R."/>
            <person name="Wakamatsu A."/>
            <person name="Hayashi K."/>
            <person name="Sato H."/>
            <person name="Nagai K."/>
            <person name="Kimura K."/>
            <person name="Makita H."/>
            <person name="Sekine M."/>
            <person name="Obayashi M."/>
            <person name="Nishi T."/>
            <person name="Shibahara T."/>
            <person name="Tanaka T."/>
            <person name="Ishii S."/>
            <person name="Yamamoto J."/>
            <person name="Saito K."/>
            <person name="Kawai Y."/>
            <person name="Isono Y."/>
            <person name="Nakamura Y."/>
            <person name="Nagahari K."/>
            <person name="Murakami K."/>
            <person name="Yasuda T."/>
            <person name="Iwayanagi T."/>
            <person name="Wagatsuma M."/>
            <person name="Shiratori A."/>
            <person name="Sudo H."/>
            <person name="Hosoiri T."/>
            <person name="Kaku Y."/>
            <person name="Kodaira H."/>
            <person name="Kondo H."/>
            <person name="Sugawara M."/>
            <person name="Takahashi M."/>
            <person name="Kanda K."/>
            <person name="Yokoi T."/>
            <person name="Furuya T."/>
            <person name="Kikkawa E."/>
            <person name="Omura Y."/>
            <person name="Abe K."/>
            <person name="Kamihara K."/>
            <person name="Katsuta N."/>
            <person name="Sato K."/>
            <person name="Tanikawa M."/>
            <person name="Yamazaki M."/>
            <person name="Ninomiya K."/>
            <person name="Ishibashi T."/>
            <person name="Yamashita H."/>
            <person name="Murakawa K."/>
            <person name="Fujimori K."/>
            <person name="Tanai H."/>
            <person name="Kimata M."/>
            <person name="Watanabe M."/>
            <person name="Hiraoka S."/>
            <person name="Chiba Y."/>
            <person name="Ishida S."/>
            <person name="Ono Y."/>
            <person name="Takiguchi S."/>
            <person name="Watanabe S."/>
            <person name="Yosida M."/>
            <person name="Hotuta T."/>
            <person name="Kusano J."/>
            <person name="Kanehori K."/>
            <person name="Takahashi-Fujii A."/>
            <person name="Hara H."/>
            <person name="Tanase T.-O."/>
            <person name="Nomura Y."/>
            <person name="Togiya S."/>
            <person name="Komai F."/>
            <person name="Hara R."/>
            <person name="Takeuchi K."/>
            <person name="Arita M."/>
            <person name="Imose N."/>
            <person name="Musashino K."/>
            <person name="Yuuki H."/>
            <person name="Oshima A."/>
            <person name="Sasaki N."/>
            <person name="Aotsuka S."/>
            <person name="Yoshikawa Y."/>
            <person name="Matsunawa H."/>
            <person name="Ichihara T."/>
            <person name="Shiohata N."/>
            <person name="Sano S."/>
            <person name="Moriya S."/>
            <person name="Momiyama H."/>
            <person name="Satoh N."/>
            <person name="Takami S."/>
            <person name="Terashima Y."/>
            <person name="Suzuki O."/>
            <person name="Nakagawa S."/>
            <person name="Senoh A."/>
            <person name="Mizoguchi H."/>
            <person name="Goto Y."/>
            <person name="Shimizu F."/>
            <person name="Wakebe H."/>
            <person name="Hishigaki H."/>
            <person name="Watanabe T."/>
            <person name="Sugiyama A."/>
            <person name="Takemoto M."/>
            <person name="Kawakami B."/>
            <person name="Yamazaki M."/>
            <person name="Watanabe K."/>
            <person name="Kumagai A."/>
            <person name="Itakura S."/>
            <person name="Fukuzumi Y."/>
            <person name="Fujimori Y."/>
            <person name="Komiyama M."/>
            <person name="Tashiro H."/>
            <person name="Tanigami A."/>
            <person name="Fujiwara T."/>
            <person name="Ono T."/>
            <person name="Yamada K."/>
            <person name="Fujii Y."/>
            <person name="Ozaki K."/>
            <person name="Hirao M."/>
            <person name="Ohmori Y."/>
            <person name="Kawabata A."/>
            <person name="Hikiji T."/>
            <person name="Kobatake N."/>
            <person name="Inagaki H."/>
            <person name="Ikema Y."/>
            <person name="Okamoto S."/>
            <person name="Okitani R."/>
            <person name="Kawakami T."/>
            <person name="Noguchi S."/>
            <person name="Itoh T."/>
            <person name="Shigeta K."/>
            <person name="Senba T."/>
            <person name="Matsumura K."/>
            <person name="Nakajima Y."/>
            <person name="Mizuno T."/>
            <person name="Morinaga M."/>
            <person name="Sasaki M."/>
            <person name="Togashi T."/>
            <person name="Oyama M."/>
            <person name="Hata H."/>
            <person name="Watanabe M."/>
            <person name="Komatsu T."/>
            <person name="Mizushima-Sugano J."/>
            <person name="Satoh T."/>
            <person name="Shirai Y."/>
            <person name="Takahashi Y."/>
            <person name="Nakagawa K."/>
            <person name="Okumura K."/>
            <person name="Nagase T."/>
            <person name="Nomura N."/>
            <person name="Kikuchi H."/>
            <person name="Masuho Y."/>
            <person name="Yamashita R."/>
            <person name="Nakai K."/>
            <person name="Yada T."/>
            <person name="Nakamura Y."/>
            <person name="Ohara O."/>
            <person name="Isogai T."/>
            <person name="Sugano S."/>
        </authorList>
    </citation>
    <scope>NUCLEOTIDE SEQUENCE [LARGE SCALE MRNA] (ISOFORM 3)</scope>
</reference>
<reference key="4">
    <citation type="journal article" date="2004" name="Nature">
        <title>The DNA sequence and comparative analysis of human chromosome 5.</title>
        <authorList>
            <person name="Schmutz J."/>
            <person name="Martin J."/>
            <person name="Terry A."/>
            <person name="Couronne O."/>
            <person name="Grimwood J."/>
            <person name="Lowry S."/>
            <person name="Gordon L.A."/>
            <person name="Scott D."/>
            <person name="Xie G."/>
            <person name="Huang W."/>
            <person name="Hellsten U."/>
            <person name="Tran-Gyamfi M."/>
            <person name="She X."/>
            <person name="Prabhakar S."/>
            <person name="Aerts A."/>
            <person name="Altherr M."/>
            <person name="Bajorek E."/>
            <person name="Black S."/>
            <person name="Branscomb E."/>
            <person name="Caoile C."/>
            <person name="Challacombe J.F."/>
            <person name="Chan Y.M."/>
            <person name="Denys M."/>
            <person name="Detter J.C."/>
            <person name="Escobar J."/>
            <person name="Flowers D."/>
            <person name="Fotopulos D."/>
            <person name="Glavina T."/>
            <person name="Gomez M."/>
            <person name="Gonzales E."/>
            <person name="Goodstein D."/>
            <person name="Grigoriev I."/>
            <person name="Groza M."/>
            <person name="Hammon N."/>
            <person name="Hawkins T."/>
            <person name="Haydu L."/>
            <person name="Israni S."/>
            <person name="Jett J."/>
            <person name="Kadner K."/>
            <person name="Kimball H."/>
            <person name="Kobayashi A."/>
            <person name="Lopez F."/>
            <person name="Lou Y."/>
            <person name="Martinez D."/>
            <person name="Medina C."/>
            <person name="Morgan J."/>
            <person name="Nandkeshwar R."/>
            <person name="Noonan J.P."/>
            <person name="Pitluck S."/>
            <person name="Pollard M."/>
            <person name="Predki P."/>
            <person name="Priest J."/>
            <person name="Ramirez L."/>
            <person name="Retterer J."/>
            <person name="Rodriguez A."/>
            <person name="Rogers S."/>
            <person name="Salamov A."/>
            <person name="Salazar A."/>
            <person name="Thayer N."/>
            <person name="Tice H."/>
            <person name="Tsai M."/>
            <person name="Ustaszewska A."/>
            <person name="Vo N."/>
            <person name="Wheeler J."/>
            <person name="Wu K."/>
            <person name="Yang J."/>
            <person name="Dickson M."/>
            <person name="Cheng J.-F."/>
            <person name="Eichler E.E."/>
            <person name="Olsen A."/>
            <person name="Pennacchio L.A."/>
            <person name="Rokhsar D.S."/>
            <person name="Richardson P."/>
            <person name="Lucas S.M."/>
            <person name="Myers R.M."/>
            <person name="Rubin E.M."/>
        </authorList>
    </citation>
    <scope>NUCLEOTIDE SEQUENCE [LARGE SCALE GENOMIC DNA]</scope>
</reference>
<reference key="5">
    <citation type="submission" date="2005-09" db="EMBL/GenBank/DDBJ databases">
        <authorList>
            <person name="Mural R.J."/>
            <person name="Istrail S."/>
            <person name="Sutton G."/>
            <person name="Florea L."/>
            <person name="Halpern A.L."/>
            <person name="Mobarry C.M."/>
            <person name="Lippert R."/>
            <person name="Walenz B."/>
            <person name="Shatkay H."/>
            <person name="Dew I."/>
            <person name="Miller J.R."/>
            <person name="Flanigan M.J."/>
            <person name="Edwards N.J."/>
            <person name="Bolanos R."/>
            <person name="Fasulo D."/>
            <person name="Halldorsson B.V."/>
            <person name="Hannenhalli S."/>
            <person name="Turner R."/>
            <person name="Yooseph S."/>
            <person name="Lu F."/>
            <person name="Nusskern D.R."/>
            <person name="Shue B.C."/>
            <person name="Zheng X.H."/>
            <person name="Zhong F."/>
            <person name="Delcher A.L."/>
            <person name="Huson D.H."/>
            <person name="Kravitz S.A."/>
            <person name="Mouchard L."/>
            <person name="Reinert K."/>
            <person name="Remington K.A."/>
            <person name="Clark A.G."/>
            <person name="Waterman M.S."/>
            <person name="Eichler E.E."/>
            <person name="Adams M.D."/>
            <person name="Hunkapiller M.W."/>
            <person name="Myers E.W."/>
            <person name="Venter J.C."/>
        </authorList>
    </citation>
    <scope>NUCLEOTIDE SEQUENCE [LARGE SCALE GENOMIC DNA]</scope>
</reference>
<reference key="6">
    <citation type="journal article" date="2004" name="Genome Res.">
        <title>The status, quality, and expansion of the NIH full-length cDNA project: the Mammalian Gene Collection (MGC).</title>
        <authorList>
            <consortium name="The MGC Project Team"/>
        </authorList>
    </citation>
    <scope>NUCLEOTIDE SEQUENCE [LARGE SCALE MRNA] (ISOFORM 1)</scope>
    <scope>VARIANT PHE-491</scope>
    <source>
        <tissue>PNS</tissue>
        <tissue>Uterus</tissue>
    </source>
</reference>
<reference key="7">
    <citation type="journal article" date="2007" name="BMC Genomics">
        <title>The full-ORF clone resource of the German cDNA consortium.</title>
        <authorList>
            <person name="Bechtel S."/>
            <person name="Rosenfelder H."/>
            <person name="Duda A."/>
            <person name="Schmidt C.P."/>
            <person name="Ernst U."/>
            <person name="Wellenreuther R."/>
            <person name="Mehrle A."/>
            <person name="Schuster C."/>
            <person name="Bahr A."/>
            <person name="Bloecker H."/>
            <person name="Heubner D."/>
            <person name="Hoerlein A."/>
            <person name="Michel G."/>
            <person name="Wedler H."/>
            <person name="Koehrer K."/>
            <person name="Ottenwaelder B."/>
            <person name="Poustka A."/>
            <person name="Wiemann S."/>
            <person name="Schupp I."/>
        </authorList>
    </citation>
    <scope>NUCLEOTIDE SEQUENCE [LARGE SCALE MRNA] OF 176-548 (ISOFORM 2)</scope>
    <source>
        <tissue>Melanoma</tissue>
    </source>
</reference>
<reference key="8">
    <citation type="journal article" date="2006" name="Biochem. Biophys. Res. Commun.">
        <title>Aberrant expression of N-acetylglucosaminyltransferase-IVa and IVb (GnT-IVa and b) in pancreatic cancer.</title>
        <authorList>
            <person name="Ide Y."/>
            <person name="Miyoshi E."/>
            <person name="Nakagawa T."/>
            <person name="Gu J."/>
            <person name="Tanemura M."/>
            <person name="Nishida T."/>
            <person name="Ito T."/>
            <person name="Yamamoto H."/>
            <person name="Kozutsumi Y."/>
            <person name="Taniguchi N."/>
        </authorList>
    </citation>
    <scope>OVEREXPRESSION IN PANCREATIC CANCER</scope>
</reference>
<reference key="9">
    <citation type="journal article" date="2006" name="Glycoconj. J.">
        <title>Kinetic properties and substrate specificities of two recombinant human N-acetylglucosaminyltransferase-IV isozymes.</title>
        <authorList>
            <person name="Oguri S."/>
            <person name="Yoshida A."/>
            <person name="Minowa M.T."/>
            <person name="Takeuchi M."/>
        </authorList>
    </citation>
    <scope>FUNCTION</scope>
    <scope>CATALYTIC ACTIVITY</scope>
    <scope>BIOPHYSICOCHEMICAL PROPERTIES</scope>
    <scope>GLYCOSYLATION</scope>
    <scope>PATHWAY</scope>
</reference>
<reference key="10">
    <citation type="journal article" date="2022" name="FASEB J.">
        <title>O-GlcNAcylation regulates beta1,4-GlcNAc-branched N-glycan biosynthesis via the OGT/SLC35A3/GnT-IV axis.</title>
        <authorList>
            <person name="Song W."/>
            <person name="Isaji T."/>
            <person name="Nakano M."/>
            <person name="Liang C."/>
            <person name="Fukuda T."/>
            <person name="Gu J."/>
        </authorList>
    </citation>
    <scope>INTERACTION WITH SLC35A3</scope>
</reference>
<feature type="chain" id="PRO_0000288593" description="Alpha-1,3-mannosyl-glycoprotein 4-beta-N-acetylglucosaminyltransferase B">
    <location>
        <begin position="1"/>
        <end position="548"/>
    </location>
</feature>
<feature type="topological domain" description="Cytoplasmic" evidence="3">
    <location>
        <begin position="1"/>
        <end position="7"/>
    </location>
</feature>
<feature type="transmembrane region" description="Helical; Signal-anchor for type II membrane protein" evidence="3">
    <location>
        <begin position="8"/>
        <end position="28"/>
    </location>
</feature>
<feature type="topological domain" description="Lumenal" evidence="3">
    <location>
        <begin position="29"/>
        <end position="548"/>
    </location>
</feature>
<feature type="coiled-coil region" evidence="3">
    <location>
        <begin position="36"/>
        <end position="83"/>
    </location>
</feature>
<feature type="glycosylation site" description="N-linked (GlcNAc...) asparagine" evidence="3">
    <location>
        <position position="87"/>
    </location>
</feature>
<feature type="glycosylation site" description="N-linked (GlcNAc...) asparagine" evidence="3">
    <location>
        <position position="103"/>
    </location>
</feature>
<feature type="splice variant" id="VSP_043231" description="In isoform 3." evidence="8">
    <original>MRLRNGTFLTLLLFCLCAFLSLSWYAALSGQK</original>
    <variation>MSRVAGTRTDVNELLQRWTPRCVRWHTGGARRVALDRPLVTACLPPA</variation>
    <location>
        <begin position="1"/>
        <end position="32"/>
    </location>
</feature>
<feature type="splice variant" id="VSP_025716" description="In isoform 2." evidence="9">
    <location>
        <position position="348"/>
    </location>
</feature>
<feature type="sequence variant" id="VAR_053913" description="In dbSNP:rs190631.">
    <original>Q</original>
    <variation>H</variation>
    <location>
        <position position="257"/>
    </location>
</feature>
<feature type="sequence variant" id="VAR_032446" description="In dbSNP:rs17854722." evidence="5">
    <original>L</original>
    <variation>F</variation>
    <location>
        <position position="491"/>
    </location>
</feature>
<name>MGT4B_HUMAN</name>
<comment type="function">
    <text evidence="4 6">Glycosyltransferase that catalyzes the transfer of GlcNAc from UDP-GlcNAc to the GlcNAcbeta1-2Manalpha1-3 arm of the core structure of N-linked glycans through a beta1-4 linkage and participates in the production of tri- and tetra-antennary N-linked sugar chains (PubMed:10372966, PubMed:17006639). Prefers complex-type N-glycans over hybrid-types (PubMed:17006639). Has lower affinities for donors or acceptors than MGAT4A, suggesting that, under physiological conditions, it is not the main contributor in N-glycan biosynthesis (PubMed:17006639).</text>
</comment>
<comment type="catalytic activity">
    <reaction evidence="6">
        <text>an N(4)-{beta-D-GlcNAc-(1-&gt;2)-alpha-D-Man-(1-&gt;3)-[alpha-D-Man-(1-&gt;6)]-beta-D-Man-(1-&gt;4)-beta-D-GlcNAc-(1-&gt;4)-beta-D-GlcNAc}-L-asparaginyl-[protein] + UDP-N-acetyl-alpha-D-glucosamine = an N(4)-{beta-D-GlcNAc-(1-&gt;2)-[beta-D-GlcNAc-(1-&gt;4)]-alpha-D-Man-(1-&gt;3)-[alpha-D-Man-(1-&gt;6)]-beta-D-Man-(1-&gt;4)-beta-D-GlcNAc-(1-&gt;4)-beta-D-GlcNAc}-L-asparaginyl-[protein] + UDP + H(+)</text>
        <dbReference type="Rhea" id="RHEA:69615"/>
        <dbReference type="Rhea" id="RHEA-COMP:14369"/>
        <dbReference type="Rhea" id="RHEA-COMP:17732"/>
        <dbReference type="ChEBI" id="CHEBI:15378"/>
        <dbReference type="ChEBI" id="CHEBI:57705"/>
        <dbReference type="ChEBI" id="CHEBI:58223"/>
        <dbReference type="ChEBI" id="CHEBI:60615"/>
        <dbReference type="ChEBI" id="CHEBI:187873"/>
    </reaction>
    <physiologicalReaction direction="left-to-right" evidence="11">
        <dbReference type="Rhea" id="RHEA:69616"/>
    </physiologicalReaction>
</comment>
<comment type="catalytic activity">
    <reaction evidence="4 6">
        <text>N(4)-{beta-D-GlcNAc-(1-&gt;2)-alpha-D-Man-(1-&gt;3)-[beta-D-GlcNAc-(1-&gt;2)-alpha-D-Man-(1-&gt;6)]-beta-D-Man-(1-&gt;4)-beta-D-GlcNAc-(1-&gt;4)-beta-D-GlcNAc}-L-asparaginyl-[protein] + UDP-N-acetyl-alpha-D-glucosamine = N(4)-{beta-D-GlcNAc-(1-&gt;2)-[beta-D-GlcNAc-(1-&gt;4)]-alpha-D-Man-(1-&gt;3)-[beta-D-GlcNAc-(1-&gt;2)-alpha-D-Man-(1-&gt;6)]-beta-D-Man-(1-&gt;4)-beta-D-GlcNAc-(1-&gt;4)-beta-D-GlcNAc}-L-asparaginyl-[protein] + UDP + H(+)</text>
        <dbReference type="Rhea" id="RHEA:16057"/>
        <dbReference type="Rhea" id="RHEA-COMP:13526"/>
        <dbReference type="Rhea" id="RHEA-COMP:14374"/>
        <dbReference type="ChEBI" id="CHEBI:15378"/>
        <dbReference type="ChEBI" id="CHEBI:57705"/>
        <dbReference type="ChEBI" id="CHEBI:58223"/>
        <dbReference type="ChEBI" id="CHEBI:60651"/>
        <dbReference type="ChEBI" id="CHEBI:139507"/>
        <dbReference type="EC" id="2.4.1.145"/>
    </reaction>
    <physiologicalReaction direction="left-to-right" evidence="4 11">
        <dbReference type="Rhea" id="RHEA:16058"/>
    </physiologicalReaction>
</comment>
<comment type="catalytic activity">
    <reaction evidence="6">
        <text>an N(4)-{beta-D-GlcNAc-(1-&gt;2)-alpha-D-Man-(1-&gt;3)-[beta-D-GlcNAc-(1-&gt;2)-[beta-D-GlcNAc-(1-&gt;6)]-alpha-D-Man-(1-&gt;6)]-beta-D-Man-(1-&gt;4)-beta-D-GlcNAc-(1-&gt;4)-beta-D-GlcNAc}-L-asparaginyl-[protein] + UDP-N-acetyl-alpha-D-glucosamine = an N(4)-{beta-D-GlcNAc-(1-&gt;2)-[beta-D-GlcNAc-(1-&gt;4)]-alpha-D-Man-(1-&gt;3)-[beta-D-GlcNAc-(1-&gt;2)-[beta-D-GlcNAc-(1-&gt;6)]-alpha-D-Man-(1-&gt;6)]-beta-D-Man-(1-&gt;4)-beta-D-GlcNAc-(1-&gt;4)-beta-D-GlcNAc}-L-asparaginyl-[protein] + UDP + H(+)</text>
        <dbReference type="Rhea" id="RHEA:69619"/>
        <dbReference type="Rhea" id="RHEA-COMP:17733"/>
        <dbReference type="Rhea" id="RHEA-COMP:17734"/>
        <dbReference type="ChEBI" id="CHEBI:15378"/>
        <dbReference type="ChEBI" id="CHEBI:57705"/>
        <dbReference type="ChEBI" id="CHEBI:58223"/>
        <dbReference type="ChEBI" id="CHEBI:187874"/>
        <dbReference type="ChEBI" id="CHEBI:187875"/>
    </reaction>
    <physiologicalReaction direction="left-to-right" evidence="11">
        <dbReference type="Rhea" id="RHEA:69620"/>
    </physiologicalReaction>
</comment>
<comment type="catalytic activity">
    <reaction evidence="6">
        <text>an N(4)-{beta-D-GlcNAc-(1-&gt;2)-alpha-D-Man-(1-&gt;3)-[beta-D-GlcNAc-(1-&gt;2)-alpha-D-Man-(1-&gt;6)]-beta-D-Man-(1-&gt;4)-beta-D-GlcNAc-(1-&gt;4)-[alpha-L-Fuc-(1-&gt;6)]-beta-D-GlcNAc}-L-asparaginyl-[protein] + UDP-N-acetyl-alpha-D-glucosamine = N(4)-{beta-D-GlcNAc-(1-&gt;2)-[beta-D-GlcNAc-(1-&gt;4)]-alpha-D-Man-(1-&gt;3)-[beta-D-GlcNAc-(1-&gt;2)-alpha-D-Man-(1-&gt;6)]-beta-D-Man-(1-&gt;4)-beta-D-GlcNAc-(1-&gt;4)-[alpha-L-Fuc-(1-&gt;6)]-beta-D-GlcNAc}-asparaginyl-[protein] + UDP + H(+)</text>
        <dbReference type="Rhea" id="RHEA:69623"/>
        <dbReference type="Rhea" id="RHEA-COMP:13532"/>
        <dbReference type="Rhea" id="RHEA-COMP:18198"/>
        <dbReference type="ChEBI" id="CHEBI:15378"/>
        <dbReference type="ChEBI" id="CHEBI:57705"/>
        <dbReference type="ChEBI" id="CHEBI:58223"/>
        <dbReference type="ChEBI" id="CHEBI:137207"/>
        <dbReference type="ChEBI" id="CHEBI:187877"/>
    </reaction>
    <physiologicalReaction direction="left-to-right" evidence="11">
        <dbReference type="Rhea" id="RHEA:69624"/>
    </physiologicalReaction>
</comment>
<comment type="catalytic activity">
    <reaction evidence="6">
        <text>an N(4)-{beta-D-GlcNAc-(1-&gt;2)-alpha-D-Man-(1-&gt;3)-[beta-D-Gal-(1-&gt;4)-beta-D-GlcNAc-(1-&gt;2)-alpha-D-Man-(1-&gt;6)]-beta-D-Man-(1-&gt;4)-beta-D-GlcNAc-(1-&gt;4)-beta-D-GlcNAc}-L-asparaginyl-[protein] + UDP-N-acetyl-alpha-D-glucosamine = an N(4)-{beta-D-GlcNAc-(1-&gt;2)-[beta-D-GlcNAc-(1-&gt;4)]-alpha-D-Man-(1-&gt;3)-[beta-D-Gal-(1-&gt;4)-beta-D-GlcNAc-(1-&gt;2)-alpha-D-Man-(1-&gt;6)]-beta-D-Man-(1-&gt;4)-beta-D-GlcNAc-(1-&gt;4)-beta-D-GlcNAc}-L-asparaginyl-[protein] + UDP + H(+)</text>
        <dbReference type="Rhea" id="RHEA:69627"/>
        <dbReference type="Rhea" id="RHEA-COMP:17737"/>
        <dbReference type="Rhea" id="RHEA-COMP:17738"/>
        <dbReference type="ChEBI" id="CHEBI:15378"/>
        <dbReference type="ChEBI" id="CHEBI:57705"/>
        <dbReference type="ChEBI" id="CHEBI:58223"/>
        <dbReference type="ChEBI" id="CHEBI:187878"/>
        <dbReference type="ChEBI" id="CHEBI:187879"/>
    </reaction>
    <physiologicalReaction direction="left-to-right" evidence="11">
        <dbReference type="Rhea" id="RHEA:69628"/>
    </physiologicalReaction>
</comment>
<comment type="catalytic activity">
    <reaction evidence="6">
        <text>N(4)-{beta-D-GlcNAc-(1-&gt;2)-alpha-D-Man-(1-&gt;3)-[alpha-D-Man-(1-&gt;3)-{alpha-D-Man-(1-&gt;6)}-alpha-D-Man-(1-&gt;6)]-beta-D-Man-(1-&gt;4)-beta-D-GlcNAc-(1-&gt;4)-beta-D-GlcNAc}-asparaginyl-[protein] + UDP-N-acetyl-alpha-D-glucosamine = N(4)-{beta-D-GlcNAc-(1-&gt;2)-[beta-D-GlcNAc-(1-&gt;4)]-alpha-D-Man-(1-&gt;3)-[alpha-D-Man-(1-&gt;3)-{alpha-D-Man-(1-&gt;6)}-alpha-D-Man-(1-&gt;6)]-beta-D-Man-(1-&gt;4)-beta-D-GlcNAc-(1-&gt;4)-beta-D-GlcNAc}-asparaginyl-[protein] + UDP + H(+)</text>
        <dbReference type="Rhea" id="RHEA:69631"/>
        <dbReference type="Rhea" id="RHEA-COMP:17739"/>
        <dbReference type="Rhea" id="RHEA-COMP:17740"/>
        <dbReference type="ChEBI" id="CHEBI:15378"/>
        <dbReference type="ChEBI" id="CHEBI:57705"/>
        <dbReference type="ChEBI" id="CHEBI:58223"/>
        <dbReference type="ChEBI" id="CHEBI:187880"/>
        <dbReference type="ChEBI" id="CHEBI:187881"/>
    </reaction>
    <physiologicalReaction direction="left-to-right" evidence="11">
        <dbReference type="Rhea" id="RHEA:69632"/>
    </physiologicalReaction>
</comment>
<comment type="catalytic activity">
    <reaction evidence="6">
        <text>N(4)-{beta-D-GlcNAc-(1-&gt;2)-alpha-D-Man-(1-&gt;3)-beta-D-Man-(1-&gt;4)-beta-D-GlcNAc-(1-&gt;4)-beta-D-GlcNAc}-asparaginyl-[protein] + UDP-N-acetyl-alpha-D-glucosamine = N(4)-{beta-D-GlcNAc-(1-&gt;2)-[beta-D-GlcNAc-(1-&gt;4)]-alpha-D-Man-(1-&gt;3)-beta-D-Man-(1-&gt;4)-beta-D-GlcNAc-(1-&gt;4)-beta-D-GlcNAc}-asparaginyl-[protein] + UDP + H(+)</text>
        <dbReference type="Rhea" id="RHEA:69635"/>
        <dbReference type="Rhea" id="RHEA-COMP:17741"/>
        <dbReference type="Rhea" id="RHEA-COMP:17742"/>
        <dbReference type="ChEBI" id="CHEBI:15378"/>
        <dbReference type="ChEBI" id="CHEBI:57705"/>
        <dbReference type="ChEBI" id="CHEBI:58223"/>
        <dbReference type="ChEBI" id="CHEBI:187882"/>
        <dbReference type="ChEBI" id="CHEBI:187883"/>
    </reaction>
    <physiologicalReaction direction="left-to-right" evidence="11">
        <dbReference type="Rhea" id="RHEA:69636"/>
    </physiologicalReaction>
</comment>
<comment type="cofactor">
    <cofactor evidence="1">
        <name>a divalent metal cation</name>
        <dbReference type="ChEBI" id="CHEBI:60240"/>
    </cofactor>
</comment>
<comment type="biophysicochemical properties">
    <kinetics>
        <KM evidence="6">0.242 mM for UDP-GlcNAc</KM>
        <KM evidence="6">10.5 mM for N(4)-{beta-D-GlcNAc-(1-&gt;2)-alpha-D-Man-(1-&gt;3)-[beta-D-GlcNAc-(1-&gt;2)-{beta-D-GlcNAc-(1-&gt;6)}-alpha-D-Man-(1-&gt;6)]-beta-D-Man-(1-&gt;4)-beta-D-GlcNAc-(1-&gt;4)-beta-D-GlcNAc}-L-Asn residue</KM>
        <KM evidence="6">5.72 mM for N(4)-{beta-D-GlcNAc-(1-&gt;2)-alpha-D-Man-(1-&gt;3)-[beta-D-GlcNAc-(1-&gt;2)-alpha-D-Man-(1-&gt;6)]-beta-D-Man-(1-&gt;4)-beta-D-GlcNAc-(1-&gt;4)-beta-D-GlcNAc}-L-Asn residue</KM>
        <KM evidence="6">3.35 mM for N(4)-{beta-D-GlcNAc-(1-&gt;2)-alpha-D-Man-(1-&gt;3)-[beta-D-GlcNAc-(1-&gt;2)-{beta-D-GlcNAc-(1-&gt;6)}-alpha-D-Man-(1-&gt;6)]-beta-D-Man-(1-&gt;4)-beta-D-GlcNAc-(1-&gt;4)-beta-D-GlcNAc}-Asn residue</KM>
        <KM evidence="6">0.341 mM for UDP-GlcNAc (soluble form)</KM>
        <KM evidence="6">6.94 mM for N(4)-{beta-D-GlcNAc-(1-&gt;2)-alpha-D-Man-(1-&gt;3)-[beta-D-GlcNAc-(1-&gt;2)-alpha-D-Man-(1-&gt;6)]-beta-D-Man-(1-&gt;4)-beta-D-GlcNAc-(1-&gt;4)-beta-D-GlcNAc} (soluble form)</KM>
        <Vmax evidence="6">0.792 pmol/min/mg enzyme (for N(4)-{beta-D-GlcNAc-(1-&gt;2)-alpha-D-Man-(1-&gt;3)-[beta-D-GlcNAc-(1-&gt;2)-{beta-D-GlcNAc-(1-&gt;6)}-alpha-D-Man-(1-&gt;6)]-beta-D-Man-(1-&gt;4)-beta-D-GlcNAc-(1-&gt;4)-beta-D-GlcNAc}-L-Asn residue)</Vmax>
        <Vmax evidence="6">0.887 pmol/min/mg enzyme (for N(4)-{beta-D-GlcNAc-(1-&gt;2)-alpha-D-Man-(1-&gt;3)-[beta-D-GlcNAc-(1-&gt;2)-alpha-D-Man-(1-&gt;6)]-beta-D-Man-(1-&gt;4)-beta-D-GlcNAc-(1-&gt;4)-beta-D-GlcNAc}-L-Asn residue)</Vmax>
        <Vmax evidence="6">1.64 pmol/min/mg enzyme (for N(4)-{beta-D-GlcNAc-(1-&gt;2)-alpha-D-Man-(1-&gt;3)-[beta-D-GlcNAc-(1-&gt;2)-{beta-D-GlcNAc-(1-&gt;6)}-alpha-D-Man-(1-&gt;6)]-beta-D-Man-(1-&gt;4)-beta-D-GlcNAc-(1-&gt;4)-beta-D-GlcNAc}-Asn residue)</Vmax>
        <Vmax evidence="6">46.6 nmol/min/mg enzyme (for N(4)-{beta-D-GlcNAc-(1-&gt;2)-alpha-D-Man-(1-&gt;3)-[beta-D-GlcNAc-(1-&gt;2)-alpha-D-Man-(1-&gt;6)]-beta-D-Man-(1-&gt;4)-beta-D-GlcNAc-(1-&gt;4)-beta-D-GlcNAc-L-Asn residue} with soluble form)</Vmax>
    </kinetics>
</comment>
<comment type="pathway">
    <text evidence="6">Protein modification; protein glycosylation.</text>
</comment>
<comment type="subunit">
    <text evidence="7">Interacts with SLC35A3.</text>
</comment>
<comment type="interaction">
    <interactant intactId="EBI-725713">
        <id>Q9UQ53</id>
    </interactant>
    <interactant intactId="EBI-743771">
        <id>Q92624</id>
        <label>APPBP2</label>
    </interactant>
    <organismsDiffer>false</organismsDiffer>
    <experiments>3</experiments>
</comment>
<comment type="interaction">
    <interactant intactId="EBI-725713">
        <id>Q9UQ53</id>
    </interactant>
    <interactant intactId="EBI-748974">
        <id>Q96CV9</id>
        <label>OPTN</label>
    </interactant>
    <organismsDiffer>false</organismsDiffer>
    <experiments>3</experiments>
</comment>
<comment type="subcellular location">
    <subcellularLocation>
        <location evidence="2">Golgi apparatus membrane</location>
        <topology evidence="2">Single-pass type II membrane protein</topology>
    </subcellularLocation>
    <text evidence="6">A processed soluble form also exists.</text>
</comment>
<comment type="alternative products">
    <event type="alternative splicing"/>
    <isoform>
        <id>Q9UQ53-1</id>
        <name>1</name>
        <sequence type="displayed"/>
    </isoform>
    <isoform>
        <id>Q9UQ53-2</id>
        <name>2</name>
        <sequence type="described" ref="VSP_025716"/>
    </isoform>
    <isoform>
        <id>Q9UQ53-3</id>
        <name>3</name>
        <sequence type="described" ref="VSP_043231"/>
    </isoform>
</comment>
<comment type="tissue specificity">
    <text evidence="4">Widely expressed. Strongly overexpressed in pancreatic cancer.</text>
</comment>
<comment type="PTM">
    <text evidence="6">N-glycosylated.</text>
</comment>
<comment type="similarity">
    <text evidence="10">Belongs to the glycosyltransferase 54 family.</text>
</comment>
<dbReference type="EC" id="2.4.1.145" evidence="6"/>
<dbReference type="EMBL" id="AB000624">
    <property type="protein sequence ID" value="BAA83464.1"/>
    <property type="molecule type" value="mRNA"/>
</dbReference>
<dbReference type="EMBL" id="AY358984">
    <property type="protein sequence ID" value="AAQ89343.1"/>
    <property type="molecule type" value="mRNA"/>
</dbReference>
<dbReference type="EMBL" id="AK023137">
    <property type="protein sequence ID" value="BAG51162.1"/>
    <property type="molecule type" value="mRNA"/>
</dbReference>
<dbReference type="EMBL" id="AC008393">
    <property type="status" value="NOT_ANNOTATED_CDS"/>
    <property type="molecule type" value="Genomic_DNA"/>
</dbReference>
<dbReference type="EMBL" id="CH471165">
    <property type="protein sequence ID" value="EAW53791.1"/>
    <property type="molecule type" value="Genomic_DNA"/>
</dbReference>
<dbReference type="EMBL" id="BC009464">
    <property type="protein sequence ID" value="AAH09464.2"/>
    <property type="molecule type" value="mRNA"/>
</dbReference>
<dbReference type="EMBL" id="BC051835">
    <property type="protein sequence ID" value="AAH51835.1"/>
    <property type="molecule type" value="mRNA"/>
</dbReference>
<dbReference type="EMBL" id="AL162067">
    <property type="protein sequence ID" value="CAB82404.2"/>
    <property type="molecule type" value="mRNA"/>
</dbReference>
<dbReference type="CCDS" id="CCDS4448.1">
    <molecule id="Q9UQ53-1"/>
</dbReference>
<dbReference type="CCDS" id="CCDS4449.1">
    <molecule id="Q9UQ53-3"/>
</dbReference>
<dbReference type="PIR" id="T47170">
    <property type="entry name" value="T47170"/>
</dbReference>
<dbReference type="RefSeq" id="NP_055090.1">
    <molecule id="Q9UQ53-1"/>
    <property type="nucleotide sequence ID" value="NM_014275.5"/>
</dbReference>
<dbReference type="RefSeq" id="NP_463459.1">
    <molecule id="Q9UQ53-3"/>
    <property type="nucleotide sequence ID" value="NM_054013.3"/>
</dbReference>
<dbReference type="SMR" id="Q9UQ53"/>
<dbReference type="BioGRID" id="116438">
    <property type="interactions" value="36"/>
</dbReference>
<dbReference type="CORUM" id="Q9UQ53"/>
<dbReference type="FunCoup" id="Q9UQ53">
    <property type="interactions" value="1425"/>
</dbReference>
<dbReference type="IntAct" id="Q9UQ53">
    <property type="interactions" value="20"/>
</dbReference>
<dbReference type="STRING" id="9606.ENSP00000338487"/>
<dbReference type="CAZy" id="GT54">
    <property type="family name" value="Glycosyltransferase Family 54"/>
</dbReference>
<dbReference type="GlyCosmos" id="Q9UQ53">
    <property type="glycosylation" value="2 sites, No reported glycans"/>
</dbReference>
<dbReference type="GlyGen" id="Q9UQ53">
    <property type="glycosylation" value="6 sites, 2 N-linked glycans (2 sites), 1 O-linked glycan (3 sites)"/>
</dbReference>
<dbReference type="iPTMnet" id="Q9UQ53"/>
<dbReference type="PhosphoSitePlus" id="Q9UQ53"/>
<dbReference type="BioMuta" id="MGAT4B"/>
<dbReference type="DMDM" id="74735195"/>
<dbReference type="jPOST" id="Q9UQ53"/>
<dbReference type="MassIVE" id="Q9UQ53"/>
<dbReference type="PaxDb" id="9606-ENSP00000338487"/>
<dbReference type="PeptideAtlas" id="Q9UQ53"/>
<dbReference type="ProteomicsDB" id="85509">
    <molecule id="Q9UQ53-1"/>
</dbReference>
<dbReference type="ProteomicsDB" id="85510">
    <molecule id="Q9UQ53-2"/>
</dbReference>
<dbReference type="ProteomicsDB" id="85511">
    <molecule id="Q9UQ53-3"/>
</dbReference>
<dbReference type="Pumba" id="Q9UQ53"/>
<dbReference type="Antibodypedia" id="29519">
    <property type="antibodies" value="74 antibodies from 17 providers"/>
</dbReference>
<dbReference type="DNASU" id="11282"/>
<dbReference type="Ensembl" id="ENST00000292591.12">
    <molecule id="Q9UQ53-1"/>
    <property type="protein sequence ID" value="ENSP00000292591.7"/>
    <property type="gene ID" value="ENSG00000161013.17"/>
</dbReference>
<dbReference type="Ensembl" id="ENST00000337755.9">
    <molecule id="Q9UQ53-3"/>
    <property type="protein sequence ID" value="ENSP00000338487.5"/>
    <property type="gene ID" value="ENSG00000161013.17"/>
</dbReference>
<dbReference type="Ensembl" id="ENST00000638266.2">
    <molecule id="Q9UQ53-1"/>
    <property type="protein sequence ID" value="ENSP00000492708.1"/>
    <property type="gene ID" value="ENSG00000284501.2"/>
</dbReference>
<dbReference type="Ensembl" id="ENST00000639538.1">
    <molecule id="Q9UQ53-3"/>
    <property type="protein sequence ID" value="ENSP00000491766.1"/>
    <property type="gene ID" value="ENSG00000284501.2"/>
</dbReference>
<dbReference type="GeneID" id="11282"/>
<dbReference type="KEGG" id="hsa:11282"/>
<dbReference type="MANE-Select" id="ENST00000292591.12">
    <property type="protein sequence ID" value="ENSP00000292591.7"/>
    <property type="RefSeq nucleotide sequence ID" value="NM_014275.5"/>
    <property type="RefSeq protein sequence ID" value="NP_055090.1"/>
</dbReference>
<dbReference type="UCSC" id="uc003mkr.4">
    <molecule id="Q9UQ53-1"/>
    <property type="organism name" value="human"/>
</dbReference>
<dbReference type="AGR" id="HGNC:7048"/>
<dbReference type="CTD" id="11282"/>
<dbReference type="DisGeNET" id="11282"/>
<dbReference type="GeneCards" id="MGAT4B"/>
<dbReference type="HGNC" id="HGNC:7048">
    <property type="gene designation" value="MGAT4B"/>
</dbReference>
<dbReference type="HPA" id="ENSG00000161013">
    <property type="expression patterns" value="Tissue enhanced (liver)"/>
</dbReference>
<dbReference type="MIM" id="604561">
    <property type="type" value="gene"/>
</dbReference>
<dbReference type="neXtProt" id="NX_Q9UQ53"/>
<dbReference type="OpenTargets" id="ENSG00000161013"/>
<dbReference type="PharmGKB" id="PA30783"/>
<dbReference type="VEuPathDB" id="HostDB:ENSG00000161013"/>
<dbReference type="eggNOG" id="ENOG502QPQJ">
    <property type="taxonomic scope" value="Eukaryota"/>
</dbReference>
<dbReference type="GeneTree" id="ENSGT00940000156526"/>
<dbReference type="HOGENOM" id="CLU_027046_3_0_1"/>
<dbReference type="InParanoid" id="Q9UQ53"/>
<dbReference type="OMA" id="FLMFHND"/>
<dbReference type="OrthoDB" id="2016523at2759"/>
<dbReference type="PAN-GO" id="Q9UQ53">
    <property type="GO annotations" value="5 GO annotations based on evolutionary models"/>
</dbReference>
<dbReference type="PhylomeDB" id="Q9UQ53"/>
<dbReference type="TreeFam" id="TF324570"/>
<dbReference type="BioCyc" id="MetaCyc:HS08564-MONOMER"/>
<dbReference type="BRENDA" id="2.4.1.145">
    <property type="organism ID" value="2681"/>
</dbReference>
<dbReference type="PathwayCommons" id="Q9UQ53"/>
<dbReference type="Reactome" id="R-HSA-9694548">
    <property type="pathway name" value="Maturation of spike protein"/>
</dbReference>
<dbReference type="Reactome" id="R-HSA-975577">
    <property type="pathway name" value="N-Glycan antennae elongation"/>
</dbReference>
<dbReference type="SignaLink" id="Q9UQ53"/>
<dbReference type="UniPathway" id="UPA00378"/>
<dbReference type="BioGRID-ORCS" id="11282">
    <property type="hits" value="18 hits in 1157 CRISPR screens"/>
</dbReference>
<dbReference type="ChiTaRS" id="MGAT4B">
    <property type="organism name" value="human"/>
</dbReference>
<dbReference type="GeneWiki" id="MGAT4B"/>
<dbReference type="GenomeRNAi" id="11282"/>
<dbReference type="Pharos" id="Q9UQ53">
    <property type="development level" value="Tbio"/>
</dbReference>
<dbReference type="PRO" id="PR:Q9UQ53"/>
<dbReference type="Proteomes" id="UP000005640">
    <property type="component" value="Chromosome 5"/>
</dbReference>
<dbReference type="RNAct" id="Q9UQ53">
    <property type="molecule type" value="protein"/>
</dbReference>
<dbReference type="Bgee" id="ENSG00000161013">
    <property type="expression patterns" value="Expressed in mucosa of transverse colon and 97 other cell types or tissues"/>
</dbReference>
<dbReference type="ExpressionAtlas" id="Q9UQ53">
    <property type="expression patterns" value="baseline and differential"/>
</dbReference>
<dbReference type="GO" id="GO:0005783">
    <property type="term" value="C:endoplasmic reticulum"/>
    <property type="evidence" value="ECO:0000318"/>
    <property type="project" value="GO_Central"/>
</dbReference>
<dbReference type="GO" id="GO:0005793">
    <property type="term" value="C:endoplasmic reticulum-Golgi intermediate compartment"/>
    <property type="evidence" value="ECO:0000318"/>
    <property type="project" value="GO_Central"/>
</dbReference>
<dbReference type="GO" id="GO:0000139">
    <property type="term" value="C:Golgi membrane"/>
    <property type="evidence" value="ECO:0000304"/>
    <property type="project" value="Reactome"/>
</dbReference>
<dbReference type="GO" id="GO:0005795">
    <property type="term" value="C:Golgi stack"/>
    <property type="evidence" value="ECO:0000318"/>
    <property type="project" value="GO_Central"/>
</dbReference>
<dbReference type="GO" id="GO:0008375">
    <property type="term" value="F:acetylglucosaminyltransferase activity"/>
    <property type="evidence" value="ECO:0000318"/>
    <property type="project" value="GO_Central"/>
</dbReference>
<dbReference type="GO" id="GO:0008454">
    <property type="term" value="F:alpha-1,3-mannosylglycoprotein 4-beta-N-acetylglucosaminyltransferase activity"/>
    <property type="evidence" value="ECO:0000314"/>
    <property type="project" value="UniProtKB"/>
</dbReference>
<dbReference type="GO" id="GO:0046872">
    <property type="term" value="F:metal ion binding"/>
    <property type="evidence" value="ECO:0007669"/>
    <property type="project" value="UniProtKB-KW"/>
</dbReference>
<dbReference type="GO" id="GO:0006491">
    <property type="term" value="P:N-glycan processing"/>
    <property type="evidence" value="ECO:0000304"/>
    <property type="project" value="ProtInc"/>
</dbReference>
<dbReference type="GO" id="GO:0006486">
    <property type="term" value="P:protein glycosylation"/>
    <property type="evidence" value="ECO:0000314"/>
    <property type="project" value="UniProtKB"/>
</dbReference>
<dbReference type="GO" id="GO:0006487">
    <property type="term" value="P:protein N-linked glycosylation"/>
    <property type="evidence" value="ECO:0000318"/>
    <property type="project" value="GO_Central"/>
</dbReference>
<dbReference type="GO" id="GO:0019082">
    <property type="term" value="P:viral protein processing"/>
    <property type="evidence" value="ECO:0000304"/>
    <property type="project" value="Reactome"/>
</dbReference>
<dbReference type="InterPro" id="IPR006759">
    <property type="entry name" value="Glyco_transf_54"/>
</dbReference>
<dbReference type="InterPro" id="IPR056576">
    <property type="entry name" value="MGAT4_A/B/C_C"/>
</dbReference>
<dbReference type="PANTHER" id="PTHR12062:SF1">
    <property type="entry name" value="ALPHA-1,3-MANNOSYL-GLYCOPROTEIN 4-BETA-N-ACETYLGLUCOSAMINYLTRANSFERASE B"/>
    <property type="match status" value="1"/>
</dbReference>
<dbReference type="PANTHER" id="PTHR12062">
    <property type="entry name" value="N-ACETYLGLUCOSAMINYLTRANSFERASE VI"/>
    <property type="match status" value="1"/>
</dbReference>
<dbReference type="Pfam" id="PF04666">
    <property type="entry name" value="MGAT4_cons"/>
    <property type="match status" value="1"/>
</dbReference>
<dbReference type="Pfam" id="PF23524">
    <property type="entry name" value="MGAT4A_C"/>
    <property type="match status" value="1"/>
</dbReference>
<protein>
    <recommendedName>
        <fullName evidence="10">Alpha-1,3-mannosyl-glycoprotein 4-beta-N-acetylglucosaminyltransferase B</fullName>
        <ecNumber evidence="6">2.4.1.145</ecNumber>
    </recommendedName>
    <alternativeName>
        <fullName>N-glycosyl-oligosaccharide-glycoprotein N-acetylglucosaminyltransferase IVb</fullName>
        <shortName>GlcNAc-T IVb</shortName>
        <shortName>GnT-IVb</shortName>
        <shortName>N-acetylglucosaminyltransferase IVb</shortName>
    </alternativeName>
    <alternativeName>
        <fullName>UDP-N-acetylglucosamine: alpha-1,3-D-mannoside beta-1,4-N-acetylglucosaminyltransferase IVb</fullName>
    </alternativeName>
</protein>
<accession>Q9UQ53</accession>
<accession>A8MPR0</accession>
<accession>Q86TF1</accession>
<accession>Q96GH4</accession>
<accession>Q9NSK6</accession>
<proteinExistence type="evidence at protein level"/>
<keyword id="KW-0025">Alternative splicing</keyword>
<keyword id="KW-0175">Coiled coil</keyword>
<keyword id="KW-0325">Glycoprotein</keyword>
<keyword id="KW-0328">Glycosyltransferase</keyword>
<keyword id="KW-0333">Golgi apparatus</keyword>
<keyword id="KW-0472">Membrane</keyword>
<keyword id="KW-0479">Metal-binding</keyword>
<keyword id="KW-1267">Proteomics identification</keyword>
<keyword id="KW-1185">Reference proteome</keyword>
<keyword id="KW-0735">Signal-anchor</keyword>
<keyword id="KW-0808">Transferase</keyword>
<keyword id="KW-0812">Transmembrane</keyword>
<keyword id="KW-1133">Transmembrane helix</keyword>
<organism>
    <name type="scientific">Homo sapiens</name>
    <name type="common">Human</name>
    <dbReference type="NCBI Taxonomy" id="9606"/>
    <lineage>
        <taxon>Eukaryota</taxon>
        <taxon>Metazoa</taxon>
        <taxon>Chordata</taxon>
        <taxon>Craniata</taxon>
        <taxon>Vertebrata</taxon>
        <taxon>Euteleostomi</taxon>
        <taxon>Mammalia</taxon>
        <taxon>Eutheria</taxon>
        <taxon>Euarchontoglires</taxon>
        <taxon>Primates</taxon>
        <taxon>Haplorrhini</taxon>
        <taxon>Catarrhini</taxon>
        <taxon>Hominidae</taxon>
        <taxon>Homo</taxon>
    </lineage>
</organism>
<sequence>MRLRNGTFLTLLLFCLCAFLSLSWYAALSGQKGDVVDVYQREFLALRDRLHAAEQESLKRSKELNLVLDEIKRAVSERQALRDGDGNRTWGRLTEDPRLKPWNGSHRHVLHLPTVFHHLPHLLAKESSLQPAVRVGQGRTGVSVVMGIPSVRREVHSYLTDTLHSLISELSPQEKEDSVIVVLIAETDSQYTSAVTENIKALFPTEIHSGLLEVISPSPHFYPDFSRLRESFGDPKERVRWRTKQNLDYCFLMMYAQSKGIYYVQLEDDIVAKPNYLSTMKNFALQQPSEDWMILEFSQLGFIGKMFKSLDLSLIVEFILMFYRDKPIDWLLDHILWVKVCNPEKDAKHCDRQKANLRIRFKPSLFQHVGTHSSLAGKIQKLKDKDFGKQALRKEHVNPPAEVSTSLKTYQHFTLEKAYLREDFFWAFTPAAGDFIRFRFFQPLRLERFFFRSGNIEHPEDKLFNTSVEVLPFDNPQSDKEALQEGRTATLRYPRSPDGYLQIGSFYKGVAEGEVDPAFGPLEALRLSIQTDSPVWVILSEIFLKKAD</sequence>
<evidence type="ECO:0000250" key="1">
    <source>
        <dbReference type="UniProtKB" id="O77836"/>
    </source>
</evidence>
<evidence type="ECO:0000250" key="2">
    <source>
        <dbReference type="UniProtKB" id="Q9D4R2"/>
    </source>
</evidence>
<evidence type="ECO:0000255" key="3"/>
<evidence type="ECO:0000269" key="4">
    <source>
    </source>
</evidence>
<evidence type="ECO:0000269" key="5">
    <source>
    </source>
</evidence>
<evidence type="ECO:0000269" key="6">
    <source>
    </source>
</evidence>
<evidence type="ECO:0000269" key="7">
    <source>
    </source>
</evidence>
<evidence type="ECO:0000303" key="8">
    <source>
    </source>
</evidence>
<evidence type="ECO:0000303" key="9">
    <source>
    </source>
</evidence>
<evidence type="ECO:0000305" key="10"/>
<evidence type="ECO:0000305" key="11">
    <source>
    </source>
</evidence>
<evidence type="ECO:0000312" key="12">
    <source>
        <dbReference type="HGNC" id="HGNC:7048"/>
    </source>
</evidence>
<gene>
    <name evidence="12" type="primary">MGAT4B</name>
    <name type="ORF">UNQ906/PRO1927</name>
</gene>